<comment type="function">
    <text evidence="1">Blocks Kv3 voltage-gated potassium channels. Reduces blood pressure.</text>
</comment>
<comment type="subcellular location">
    <subcellularLocation>
        <location evidence="5">Secreted</location>
    </subcellularLocation>
    <subcellularLocation>
        <location evidence="5">Nematocyst</location>
    </subcellularLocation>
</comment>
<comment type="tissue specificity">
    <text evidence="6">Experimental results show no expression in the ectodermal tissue from the distal and proximal tentacles, body wall, and oral disk. Since paralogs are expressed in this tissue, an expression of this toxin in this tissue is probable. The negative results could be explained by the very low abundance of EST sequences.</text>
</comment>
<comment type="PTM">
    <text evidence="5">Lacks the conventional Cys residue at position 55. Thus, only 2 disulfide are possible present.</text>
</comment>
<comment type="similarity">
    <text evidence="5">Belongs to the sea anemone type 3 (BDS) potassium channel toxin family.</text>
</comment>
<comment type="caution">
    <text evidence="5">Opinions are divided on whether Anemonia viridis (Forsskal, 1775) and Anemonia sulcata (Pennant, 1777) are separate species.</text>
</comment>
<name>BDSE_ANEVI</name>
<feature type="signal peptide" evidence="2">
    <location>
        <begin position="1"/>
        <end position="19"/>
    </location>
</feature>
<feature type="propeptide" id="PRO_0000433672" evidence="1">
    <location>
        <begin position="20"/>
        <end position="31"/>
    </location>
</feature>
<feature type="chain" id="PRO_0000433673" description="Kappa-actitoxin-Avd4n">
    <location>
        <begin position="34"/>
        <end position="76"/>
    </location>
</feature>
<feature type="disulfide bond" evidence="1">
    <location>
        <begin position="37"/>
        <end position="72"/>
    </location>
</feature>
<feature type="disulfide bond" evidence="1">
    <location>
        <begin position="39"/>
        <end position="65"/>
    </location>
</feature>
<keyword id="KW-0165">Cleavage on pair of basic residues</keyword>
<keyword id="KW-1015">Disulfide bond</keyword>
<keyword id="KW-0382">Hypotensive agent</keyword>
<keyword id="KW-0872">Ion channel impairing toxin</keyword>
<keyword id="KW-0166">Nematocyst</keyword>
<keyword id="KW-0528">Neurotoxin</keyword>
<keyword id="KW-0632">Potassium channel impairing toxin</keyword>
<keyword id="KW-0964">Secreted</keyword>
<keyword id="KW-0732">Signal</keyword>
<keyword id="KW-0800">Toxin</keyword>
<keyword id="KW-1220">Voltage-gated potassium channel impairing toxin</keyword>
<sequence length="76" mass="8273">MNKAFFLCLVVLCAAVVFAAEDLQKGKHAPFKRAAPCFCSGNPGRGDLWILRGPSPGGYGYTSNCYKWPNICCFPP</sequence>
<dbReference type="EMBL" id="FK745823">
    <property type="status" value="NOT_ANNOTATED_CDS"/>
    <property type="molecule type" value="mRNA"/>
</dbReference>
<dbReference type="SMR" id="P0DMY8"/>
<dbReference type="GO" id="GO:0005576">
    <property type="term" value="C:extracellular region"/>
    <property type="evidence" value="ECO:0007669"/>
    <property type="project" value="UniProtKB-SubCell"/>
</dbReference>
<dbReference type="GO" id="GO:0042151">
    <property type="term" value="C:nematocyst"/>
    <property type="evidence" value="ECO:0007669"/>
    <property type="project" value="UniProtKB-SubCell"/>
</dbReference>
<dbReference type="GO" id="GO:0008200">
    <property type="term" value="F:ion channel inhibitor activity"/>
    <property type="evidence" value="ECO:0007669"/>
    <property type="project" value="InterPro"/>
</dbReference>
<dbReference type="GO" id="GO:0015459">
    <property type="term" value="F:potassium channel regulator activity"/>
    <property type="evidence" value="ECO:0007669"/>
    <property type="project" value="UniProtKB-KW"/>
</dbReference>
<dbReference type="GO" id="GO:0090729">
    <property type="term" value="F:toxin activity"/>
    <property type="evidence" value="ECO:0007669"/>
    <property type="project" value="UniProtKB-KW"/>
</dbReference>
<dbReference type="GO" id="GO:0008217">
    <property type="term" value="P:regulation of blood pressure"/>
    <property type="evidence" value="ECO:0007669"/>
    <property type="project" value="UniProtKB-KW"/>
</dbReference>
<dbReference type="Gene3D" id="2.20.20.10">
    <property type="entry name" value="Anthopleurin-A"/>
    <property type="match status" value="1"/>
</dbReference>
<dbReference type="InterPro" id="IPR012414">
    <property type="entry name" value="BDS_K_chnl_tox"/>
</dbReference>
<dbReference type="InterPro" id="IPR023355">
    <property type="entry name" value="Myo_ane_neurotoxin_sf"/>
</dbReference>
<dbReference type="Pfam" id="PF07936">
    <property type="entry name" value="Defensin_4"/>
    <property type="match status" value="1"/>
</dbReference>
<dbReference type="SUPFAM" id="SSF57392">
    <property type="entry name" value="Defensin-like"/>
    <property type="match status" value="1"/>
</dbReference>
<organism>
    <name type="scientific">Anemonia viridis</name>
    <name type="common">Snakelocks anemone</name>
    <dbReference type="NCBI Taxonomy" id="51769"/>
    <lineage>
        <taxon>Eukaryota</taxon>
        <taxon>Metazoa</taxon>
        <taxon>Cnidaria</taxon>
        <taxon>Anthozoa</taxon>
        <taxon>Hexacorallia</taxon>
        <taxon>Actiniaria</taxon>
        <taxon>Actiniidae</taxon>
        <taxon>Anemonia</taxon>
    </lineage>
</organism>
<proteinExistence type="evidence at transcript level"/>
<reference key="1">
    <citation type="journal article" date="2009" name="BMC Genomics">
        <title>Comprehensive EST analysis of the symbiotic sea anemone, Anemonia viridis.</title>
        <authorList>
            <person name="Sabourault C."/>
            <person name="Ganot P."/>
            <person name="Deleury E."/>
            <person name="Allemand D."/>
            <person name="Furla P."/>
        </authorList>
    </citation>
    <scope>NUCLEOTIDE SEQUENCE [MRNA]</scope>
</reference>
<reference key="2">
    <citation type="journal article" date="2011" name="BMC Genomics">
        <title>The mining of toxin-like polypeptides from EST database by single residue distribution analysis.</title>
        <authorList>
            <person name="Kozlov S."/>
            <person name="Grishin E."/>
        </authorList>
    </citation>
    <scope>NOMENCLATURE</scope>
</reference>
<reference key="3">
    <citation type="journal article" date="2012" name="Toxicon">
        <title>Development of a rational nomenclature for naming peptide and protein toxins from sea anemones.</title>
        <authorList>
            <person name="Oliveira J.S."/>
            <person name="Fuentes-Silva D."/>
            <person name="King G.F."/>
        </authorList>
    </citation>
    <scope>NOMENCLATURE</scope>
</reference>
<reference key="4">
    <citation type="journal article" date="2013" name="Mar. Drugs">
        <title>Evidence of accelerated evolution and ectodermal-specific expression of presumptive BDS toxin cDNAs from Anemonia viridis.</title>
        <authorList>
            <person name="Nicosia A."/>
            <person name="Maggio T."/>
            <person name="Mazzola S."/>
            <person name="Cuttitta A."/>
        </authorList>
    </citation>
    <scope>3D-STRUCTURE MODELING</scope>
    <scope>TISSUE SPECIFICITY</scope>
</reference>
<accession>P0DMY8</accession>
<evidence type="ECO:0000250" key="1">
    <source>
        <dbReference type="UniProtKB" id="P11494"/>
    </source>
</evidence>
<evidence type="ECO:0000255" key="2"/>
<evidence type="ECO:0000303" key="3">
    <source>
    </source>
</evidence>
<evidence type="ECO:0000303" key="4">
    <source>
    </source>
</evidence>
<evidence type="ECO:0000305" key="5"/>
<evidence type="ECO:0000305" key="6">
    <source>
    </source>
</evidence>
<protein>
    <recommendedName>
        <fullName evidence="4">Kappa-actitoxin-Avd4n</fullName>
        <shortName evidence="4">Kappa-AITX-Avd4n</shortName>
    </recommendedName>
    <alternativeName>
        <fullName>Antihypertensive protein BDS-14</fullName>
    </alternativeName>
    <alternativeName>
        <fullName evidence="3">Blood depressing substance 14</fullName>
        <shortName evidence="3">BDS-14</shortName>
    </alternativeName>
</protein>